<feature type="chain" id="PRO_0000141977" description="1-(5-phosphoribosyl)-5-[(5-phosphoribosylamino)methylideneamino] imidazole-4-carboxamide isomerase">
    <location>
        <begin position="1"/>
        <end position="240"/>
    </location>
</feature>
<feature type="active site" description="Proton acceptor" evidence="1">
    <location>
        <position position="10"/>
    </location>
</feature>
<feature type="active site" description="Proton donor" evidence="1">
    <location>
        <position position="131"/>
    </location>
</feature>
<gene>
    <name evidence="1" type="primary">hisA</name>
    <name type="ordered locus">ABC3045</name>
</gene>
<sequence length="240" mass="25698">MSYTIYPAIDIRAGKCVRLEQGDYNKETIYGESPYKMAKSFQDAGAKWVHVVDLDGAKAKRPVNDEAILTIAQKLDVPVQVGGGIRTEQDIDRYINGGVARVVLGSVAVYQPDFTKQMLAKYGEQMAIGIDARDGYVATEGWLETSHVKAEDLAAEMARFGAKTFIFTDIARDGMLTGPNIEACVALSKAANANVIASGGVSSIADLAQLRAASLAGAIVGKALYTKRFTLEEALAEGEL</sequence>
<organism>
    <name type="scientific">Shouchella clausii (strain KSM-K16)</name>
    <name type="common">Alkalihalobacillus clausii</name>
    <dbReference type="NCBI Taxonomy" id="66692"/>
    <lineage>
        <taxon>Bacteria</taxon>
        <taxon>Bacillati</taxon>
        <taxon>Bacillota</taxon>
        <taxon>Bacilli</taxon>
        <taxon>Bacillales</taxon>
        <taxon>Bacillaceae</taxon>
        <taxon>Shouchella</taxon>
    </lineage>
</organism>
<dbReference type="EC" id="5.3.1.16" evidence="1"/>
<dbReference type="EMBL" id="AP006627">
    <property type="protein sequence ID" value="BAD65579.1"/>
    <property type="molecule type" value="Genomic_DNA"/>
</dbReference>
<dbReference type="RefSeq" id="WP_011247887.1">
    <property type="nucleotide sequence ID" value="NC_006582.1"/>
</dbReference>
<dbReference type="SMR" id="Q5WDI1"/>
<dbReference type="STRING" id="66692.ABC3045"/>
<dbReference type="KEGG" id="bcl:ABC3045"/>
<dbReference type="eggNOG" id="COG0106">
    <property type="taxonomic scope" value="Bacteria"/>
</dbReference>
<dbReference type="HOGENOM" id="CLU_048577_1_1_9"/>
<dbReference type="OrthoDB" id="9807749at2"/>
<dbReference type="UniPathway" id="UPA00031">
    <property type="reaction ID" value="UER00009"/>
</dbReference>
<dbReference type="Proteomes" id="UP000001168">
    <property type="component" value="Chromosome"/>
</dbReference>
<dbReference type="GO" id="GO:0005737">
    <property type="term" value="C:cytoplasm"/>
    <property type="evidence" value="ECO:0007669"/>
    <property type="project" value="UniProtKB-SubCell"/>
</dbReference>
<dbReference type="GO" id="GO:0003949">
    <property type="term" value="F:1-(5-phosphoribosyl)-5-[(5-phosphoribosylamino)methylideneamino]imidazole-4-carboxamide isomerase activity"/>
    <property type="evidence" value="ECO:0007669"/>
    <property type="project" value="UniProtKB-UniRule"/>
</dbReference>
<dbReference type="GO" id="GO:0000105">
    <property type="term" value="P:L-histidine biosynthetic process"/>
    <property type="evidence" value="ECO:0007669"/>
    <property type="project" value="UniProtKB-UniRule"/>
</dbReference>
<dbReference type="GO" id="GO:0000162">
    <property type="term" value="P:L-tryptophan biosynthetic process"/>
    <property type="evidence" value="ECO:0007669"/>
    <property type="project" value="TreeGrafter"/>
</dbReference>
<dbReference type="CDD" id="cd04732">
    <property type="entry name" value="HisA"/>
    <property type="match status" value="1"/>
</dbReference>
<dbReference type="FunFam" id="3.20.20.70:FF:000009">
    <property type="entry name" value="1-(5-phosphoribosyl)-5-[(5-phosphoribosylamino)methylideneamino] imidazole-4-carboxamide isomerase"/>
    <property type="match status" value="1"/>
</dbReference>
<dbReference type="Gene3D" id="3.20.20.70">
    <property type="entry name" value="Aldolase class I"/>
    <property type="match status" value="1"/>
</dbReference>
<dbReference type="HAMAP" id="MF_01014">
    <property type="entry name" value="HisA"/>
    <property type="match status" value="1"/>
</dbReference>
<dbReference type="InterPro" id="IPR013785">
    <property type="entry name" value="Aldolase_TIM"/>
</dbReference>
<dbReference type="InterPro" id="IPR006062">
    <property type="entry name" value="His_biosynth"/>
</dbReference>
<dbReference type="InterPro" id="IPR006063">
    <property type="entry name" value="HisA_bact_arch"/>
</dbReference>
<dbReference type="InterPro" id="IPR044524">
    <property type="entry name" value="Isoase_HisA-like"/>
</dbReference>
<dbReference type="InterPro" id="IPR023016">
    <property type="entry name" value="Isoase_HisA-like_bact"/>
</dbReference>
<dbReference type="InterPro" id="IPR011060">
    <property type="entry name" value="RibuloseP-bd_barrel"/>
</dbReference>
<dbReference type="NCBIfam" id="TIGR00007">
    <property type="entry name" value="1-(5-phosphoribosyl)-5-[(5-phosphoribosylamino)methylideneamino]imidazole-4-carboxamide isomerase"/>
    <property type="match status" value="1"/>
</dbReference>
<dbReference type="PANTHER" id="PTHR43090">
    <property type="entry name" value="1-(5-PHOSPHORIBOSYL)-5-[(5-PHOSPHORIBOSYLAMINO)METHYLIDENEAMINO] IMIDAZOLE-4-CARBOXAMIDE ISOMERASE"/>
    <property type="match status" value="1"/>
</dbReference>
<dbReference type="PANTHER" id="PTHR43090:SF2">
    <property type="entry name" value="1-(5-PHOSPHORIBOSYL)-5-[(5-PHOSPHORIBOSYLAMINO)METHYLIDENEAMINO] IMIDAZOLE-4-CARBOXAMIDE ISOMERASE"/>
    <property type="match status" value="1"/>
</dbReference>
<dbReference type="Pfam" id="PF00977">
    <property type="entry name" value="His_biosynth"/>
    <property type="match status" value="1"/>
</dbReference>
<dbReference type="SUPFAM" id="SSF51366">
    <property type="entry name" value="Ribulose-phoshate binding barrel"/>
    <property type="match status" value="1"/>
</dbReference>
<accession>Q5WDI1</accession>
<protein>
    <recommendedName>
        <fullName evidence="1">1-(5-phosphoribosyl)-5-[(5-phosphoribosylamino)methylideneamino] imidazole-4-carboxamide isomerase</fullName>
        <ecNumber evidence="1">5.3.1.16</ecNumber>
    </recommendedName>
    <alternativeName>
        <fullName evidence="1">Phosphoribosylformimino-5-aminoimidazole carboxamide ribotide isomerase</fullName>
    </alternativeName>
</protein>
<comment type="catalytic activity">
    <reaction evidence="1">
        <text>1-(5-phospho-beta-D-ribosyl)-5-[(5-phospho-beta-D-ribosylamino)methylideneamino]imidazole-4-carboxamide = 5-[(5-phospho-1-deoxy-D-ribulos-1-ylimino)methylamino]-1-(5-phospho-beta-D-ribosyl)imidazole-4-carboxamide</text>
        <dbReference type="Rhea" id="RHEA:15469"/>
        <dbReference type="ChEBI" id="CHEBI:58435"/>
        <dbReference type="ChEBI" id="CHEBI:58525"/>
        <dbReference type="EC" id="5.3.1.16"/>
    </reaction>
</comment>
<comment type="pathway">
    <text evidence="1">Amino-acid biosynthesis; L-histidine biosynthesis; L-histidine from 5-phospho-alpha-D-ribose 1-diphosphate: step 4/9.</text>
</comment>
<comment type="subcellular location">
    <subcellularLocation>
        <location evidence="1">Cytoplasm</location>
    </subcellularLocation>
</comment>
<comment type="similarity">
    <text evidence="1">Belongs to the HisA/HisF family.</text>
</comment>
<proteinExistence type="inferred from homology"/>
<reference key="1">
    <citation type="submission" date="2003-10" db="EMBL/GenBank/DDBJ databases">
        <title>The complete genome sequence of the alkaliphilic Bacillus clausii KSM-K16.</title>
        <authorList>
            <person name="Takaki Y."/>
            <person name="Kageyama Y."/>
            <person name="Shimamura S."/>
            <person name="Suzuki H."/>
            <person name="Nishi S."/>
            <person name="Hatada Y."/>
            <person name="Kawai S."/>
            <person name="Ito S."/>
            <person name="Horikoshi K."/>
        </authorList>
    </citation>
    <scope>NUCLEOTIDE SEQUENCE [LARGE SCALE GENOMIC DNA]</scope>
    <source>
        <strain>KSM-K16</strain>
    </source>
</reference>
<keyword id="KW-0028">Amino-acid biosynthesis</keyword>
<keyword id="KW-0963">Cytoplasm</keyword>
<keyword id="KW-0368">Histidine biosynthesis</keyword>
<keyword id="KW-0413">Isomerase</keyword>
<keyword id="KW-1185">Reference proteome</keyword>
<evidence type="ECO:0000255" key="1">
    <source>
        <dbReference type="HAMAP-Rule" id="MF_01014"/>
    </source>
</evidence>
<name>HIS4_SHOC1</name>